<organism>
    <name type="scientific">Homo sapiens</name>
    <name type="common">Human</name>
    <dbReference type="NCBI Taxonomy" id="9606"/>
    <lineage>
        <taxon>Eukaryota</taxon>
        <taxon>Metazoa</taxon>
        <taxon>Chordata</taxon>
        <taxon>Craniata</taxon>
        <taxon>Vertebrata</taxon>
        <taxon>Euteleostomi</taxon>
        <taxon>Mammalia</taxon>
        <taxon>Eutheria</taxon>
        <taxon>Euarchontoglires</taxon>
        <taxon>Primates</taxon>
        <taxon>Haplorrhini</taxon>
        <taxon>Catarrhini</taxon>
        <taxon>Hominidae</taxon>
        <taxon>Homo</taxon>
    </lineage>
</organism>
<name>HS3S1_HUMAN</name>
<dbReference type="EC" id="2.8.2.23" evidence="4 7"/>
<dbReference type="EMBL" id="AF019386">
    <property type="protein sequence ID" value="AAB84388.1"/>
    <property type="molecule type" value="mRNA"/>
</dbReference>
<dbReference type="EMBL" id="AK096823">
    <property type="protein sequence ID" value="BAG53368.1"/>
    <property type="molecule type" value="mRNA"/>
</dbReference>
<dbReference type="EMBL" id="CH471069">
    <property type="protein sequence ID" value="EAW92699.1"/>
    <property type="molecule type" value="Genomic_DNA"/>
</dbReference>
<dbReference type="EMBL" id="BC057803">
    <property type="protein sequence ID" value="AAH57803.1"/>
    <property type="molecule type" value="mRNA"/>
</dbReference>
<dbReference type="CCDS" id="CCDS3408.1"/>
<dbReference type="RefSeq" id="NP_005105.1">
    <property type="nucleotide sequence ID" value="NM_005114.4"/>
</dbReference>
<dbReference type="RefSeq" id="XP_011512215.1">
    <property type="nucleotide sequence ID" value="XM_011513913.4"/>
</dbReference>
<dbReference type="RefSeq" id="XP_054207323.1">
    <property type="nucleotide sequence ID" value="XM_054351348.1"/>
</dbReference>
<dbReference type="PDB" id="1ZRH">
    <property type="method" value="X-ray"/>
    <property type="resolution" value="2.10 A"/>
    <property type="chains" value="A=36-307"/>
</dbReference>
<dbReference type="PDBsum" id="1ZRH"/>
<dbReference type="SMR" id="O14792"/>
<dbReference type="BioGRID" id="115282">
    <property type="interactions" value="120"/>
</dbReference>
<dbReference type="FunCoup" id="O14792">
    <property type="interactions" value="150"/>
</dbReference>
<dbReference type="IntAct" id="O14792">
    <property type="interactions" value="34"/>
</dbReference>
<dbReference type="STRING" id="9606.ENSP00000002596"/>
<dbReference type="DrugBank" id="DB01812">
    <property type="generic name" value="Adenosine 3',5'-diphosphate"/>
</dbReference>
<dbReference type="GlyCosmos" id="O14792">
    <property type="glycosylation" value="4 sites, No reported glycans"/>
</dbReference>
<dbReference type="GlyGen" id="O14792">
    <property type="glycosylation" value="4 sites"/>
</dbReference>
<dbReference type="iPTMnet" id="O14792"/>
<dbReference type="PhosphoSitePlus" id="O14792"/>
<dbReference type="BioMuta" id="HS3ST1"/>
<dbReference type="jPOST" id="O14792"/>
<dbReference type="MassIVE" id="O14792"/>
<dbReference type="PaxDb" id="9606-ENSP00000002596"/>
<dbReference type="PeptideAtlas" id="O14792"/>
<dbReference type="Antibodypedia" id="1208">
    <property type="antibodies" value="125 antibodies from 26 providers"/>
</dbReference>
<dbReference type="DNASU" id="9957"/>
<dbReference type="Ensembl" id="ENST00000002596.6">
    <property type="protein sequence ID" value="ENSP00000002596.5"/>
    <property type="gene ID" value="ENSG00000002587.10"/>
</dbReference>
<dbReference type="GeneID" id="9957"/>
<dbReference type="KEGG" id="hsa:9957"/>
<dbReference type="MANE-Select" id="ENST00000002596.6">
    <property type="protein sequence ID" value="ENSP00000002596.5"/>
    <property type="RefSeq nucleotide sequence ID" value="NM_005114.4"/>
    <property type="RefSeq protein sequence ID" value="NP_005105.1"/>
</dbReference>
<dbReference type="UCSC" id="uc003gmq.4">
    <property type="organism name" value="human"/>
</dbReference>
<dbReference type="AGR" id="HGNC:5194"/>
<dbReference type="CTD" id="9957"/>
<dbReference type="DisGeNET" id="9957"/>
<dbReference type="GeneCards" id="HS3ST1"/>
<dbReference type="HGNC" id="HGNC:5194">
    <property type="gene designation" value="HS3ST1"/>
</dbReference>
<dbReference type="HPA" id="ENSG00000002587">
    <property type="expression patterns" value="Tissue enhanced (ovary)"/>
</dbReference>
<dbReference type="MIM" id="603244">
    <property type="type" value="gene"/>
</dbReference>
<dbReference type="neXtProt" id="NX_O14792"/>
<dbReference type="OpenTargets" id="ENSG00000002587"/>
<dbReference type="PharmGKB" id="PA29467"/>
<dbReference type="VEuPathDB" id="HostDB:ENSG00000002587"/>
<dbReference type="eggNOG" id="KOG3704">
    <property type="taxonomic scope" value="Eukaryota"/>
</dbReference>
<dbReference type="GeneTree" id="ENSGT00940000160449"/>
<dbReference type="HOGENOM" id="CLU_017703_0_0_1"/>
<dbReference type="InParanoid" id="O14792"/>
<dbReference type="OMA" id="HMQNWLQ"/>
<dbReference type="OrthoDB" id="411451at2759"/>
<dbReference type="PAN-GO" id="O14792">
    <property type="GO annotations" value="1 GO annotation based on evolutionary models"/>
</dbReference>
<dbReference type="PhylomeDB" id="O14792"/>
<dbReference type="TreeFam" id="TF350755"/>
<dbReference type="BioCyc" id="MetaCyc:HS00082-MONOMER"/>
<dbReference type="BRENDA" id="2.8.2.23">
    <property type="organism ID" value="2681"/>
</dbReference>
<dbReference type="PathwayCommons" id="O14792"/>
<dbReference type="Reactome" id="R-HSA-2022928">
    <property type="pathway name" value="HS-GAG biosynthesis"/>
</dbReference>
<dbReference type="SignaLink" id="O14792"/>
<dbReference type="BioGRID-ORCS" id="9957">
    <property type="hits" value="6 hits in 1147 CRISPR screens"/>
</dbReference>
<dbReference type="ChiTaRS" id="HS3ST1">
    <property type="organism name" value="human"/>
</dbReference>
<dbReference type="EvolutionaryTrace" id="O14792"/>
<dbReference type="GeneWiki" id="HS3ST1"/>
<dbReference type="GenomeRNAi" id="9957"/>
<dbReference type="Pharos" id="O14792">
    <property type="development level" value="Tbio"/>
</dbReference>
<dbReference type="PRO" id="PR:O14792"/>
<dbReference type="Proteomes" id="UP000005640">
    <property type="component" value="Chromosome 4"/>
</dbReference>
<dbReference type="RNAct" id="O14792">
    <property type="molecule type" value="protein"/>
</dbReference>
<dbReference type="Bgee" id="ENSG00000002587">
    <property type="expression patterns" value="Expressed in nasal cavity epithelium and 168 other cell types or tissues"/>
</dbReference>
<dbReference type="ExpressionAtlas" id="O14792">
    <property type="expression patterns" value="baseline and differential"/>
</dbReference>
<dbReference type="GO" id="GO:0005796">
    <property type="term" value="C:Golgi lumen"/>
    <property type="evidence" value="ECO:0000304"/>
    <property type="project" value="Reactome"/>
</dbReference>
<dbReference type="GO" id="GO:0008467">
    <property type="term" value="F:[heparan sulfate]-glucosamine 3-sulfotransferase activity"/>
    <property type="evidence" value="ECO:0000314"/>
    <property type="project" value="UniProtKB"/>
</dbReference>
<dbReference type="GO" id="GO:0008146">
    <property type="term" value="F:sulfotransferase activity"/>
    <property type="evidence" value="ECO:0000304"/>
    <property type="project" value="ProtInc"/>
</dbReference>
<dbReference type="GO" id="GO:0006024">
    <property type="term" value="P:glycosaminoglycan biosynthetic process"/>
    <property type="evidence" value="ECO:0000314"/>
    <property type="project" value="UniProtKB"/>
</dbReference>
<dbReference type="GO" id="GO:0015012">
    <property type="term" value="P:heparan sulfate proteoglycan biosynthetic process"/>
    <property type="evidence" value="ECO:0007669"/>
    <property type="project" value="Ensembl"/>
</dbReference>
<dbReference type="FunFam" id="3.40.50.300:FF:000674">
    <property type="entry name" value="Sulfotransferase"/>
    <property type="match status" value="1"/>
</dbReference>
<dbReference type="Gene3D" id="3.40.50.300">
    <property type="entry name" value="P-loop containing nucleotide triphosphate hydrolases"/>
    <property type="match status" value="1"/>
</dbReference>
<dbReference type="InterPro" id="IPR037359">
    <property type="entry name" value="NST/OST"/>
</dbReference>
<dbReference type="InterPro" id="IPR027417">
    <property type="entry name" value="P-loop_NTPase"/>
</dbReference>
<dbReference type="InterPro" id="IPR000863">
    <property type="entry name" value="Sulfotransferase_dom"/>
</dbReference>
<dbReference type="PANTHER" id="PTHR10605:SF16">
    <property type="entry name" value="HEPARAN SULFATE GLUCOSAMINE 3-O-SULFOTRANSFERASE 1"/>
    <property type="match status" value="1"/>
</dbReference>
<dbReference type="PANTHER" id="PTHR10605">
    <property type="entry name" value="HEPARAN SULFATE SULFOTRANSFERASE"/>
    <property type="match status" value="1"/>
</dbReference>
<dbReference type="Pfam" id="PF00685">
    <property type="entry name" value="Sulfotransfer_1"/>
    <property type="match status" value="1"/>
</dbReference>
<dbReference type="SUPFAM" id="SSF52540">
    <property type="entry name" value="P-loop containing nucleoside triphosphate hydrolases"/>
    <property type="match status" value="1"/>
</dbReference>
<feature type="signal peptide" evidence="1">
    <location>
        <begin position="1"/>
        <end position="20"/>
    </location>
</feature>
<feature type="chain" id="PRO_0000033451" description="Heparan sulfate glucosamine 3-O-sulfotransferase 1">
    <location>
        <begin position="21"/>
        <end position="307"/>
    </location>
</feature>
<feature type="binding site" evidence="11">
    <location>
        <begin position="64"/>
        <end position="68"/>
    </location>
    <ligand>
        <name>3'-phosphoadenylyl sulfate</name>
        <dbReference type="ChEBI" id="CHEBI:58339"/>
    </ligand>
</feature>
<feature type="binding site" evidence="11">
    <location>
        <position position="147"/>
    </location>
    <ligand>
        <name>3'-phosphoadenylyl sulfate</name>
        <dbReference type="ChEBI" id="CHEBI:58339"/>
    </ligand>
</feature>
<feature type="binding site" evidence="11">
    <location>
        <position position="155"/>
    </location>
    <ligand>
        <name>3'-phosphoadenylyl sulfate</name>
        <dbReference type="ChEBI" id="CHEBI:58339"/>
    </ligand>
</feature>
<feature type="binding site" evidence="11">
    <location>
        <position position="255"/>
    </location>
    <ligand>
        <name>3'-phosphoadenylyl sulfate</name>
        <dbReference type="ChEBI" id="CHEBI:58339"/>
    </ligand>
</feature>
<feature type="binding site" evidence="11">
    <location>
        <begin position="270"/>
        <end position="274"/>
    </location>
    <ligand>
        <name>3'-phosphoadenylyl sulfate</name>
        <dbReference type="ChEBI" id="CHEBI:58339"/>
    </ligand>
</feature>
<feature type="glycosylation site" description="N-linked (GlcNAc...) asparagine" evidence="2">
    <location>
        <position position="48"/>
    </location>
</feature>
<feature type="glycosylation site" description="N-linked (GlcNAc...) asparagine" evidence="2">
    <location>
        <position position="192"/>
    </location>
</feature>
<feature type="glycosylation site" description="N-linked (GlcNAc...) asparagine" evidence="2">
    <location>
        <position position="242"/>
    </location>
</feature>
<feature type="glycosylation site" description="N-linked (GlcNAc...) asparagine" evidence="2">
    <location>
        <position position="249"/>
    </location>
</feature>
<feature type="disulfide bond" evidence="8">
    <location>
        <begin position="256"/>
        <end position="265"/>
    </location>
</feature>
<feature type="sequence variant" id="VAR_021515" description="In dbSNP:rs11559238." evidence="3">
    <original>P</original>
    <variation>T</variation>
    <location>
        <position position="22"/>
    </location>
</feature>
<feature type="sequence variant" id="VAR_052529" description="In dbSNP:rs34719057.">
    <original>K</original>
    <variation>R</variation>
    <location>
        <position position="295"/>
    </location>
</feature>
<feature type="strand" evidence="12">
    <location>
        <begin position="56"/>
        <end position="59"/>
    </location>
</feature>
<feature type="helix" evidence="12">
    <location>
        <begin position="67"/>
        <end position="74"/>
    </location>
</feature>
<feature type="strand" evidence="12">
    <location>
        <begin position="80"/>
        <end position="82"/>
    </location>
</feature>
<feature type="turn" evidence="12">
    <location>
        <begin position="89"/>
        <end position="91"/>
    </location>
</feature>
<feature type="helix" evidence="12">
    <location>
        <begin position="93"/>
        <end position="96"/>
    </location>
</feature>
<feature type="helix" evidence="12">
    <location>
        <begin position="99"/>
        <end position="105"/>
    </location>
</feature>
<feature type="strand" evidence="12">
    <location>
        <begin position="114"/>
        <end position="119"/>
    </location>
</feature>
<feature type="helix" evidence="12">
    <location>
        <begin position="121"/>
        <end position="125"/>
    </location>
</feature>
<feature type="helix" evidence="12">
    <location>
        <begin position="129"/>
        <end position="136"/>
    </location>
</feature>
<feature type="strand" evidence="12">
    <location>
        <begin position="141"/>
        <end position="146"/>
    </location>
</feature>
<feature type="helix" evidence="12">
    <location>
        <begin position="149"/>
        <end position="166"/>
    </location>
</feature>
<feature type="helix" evidence="12">
    <location>
        <begin position="174"/>
        <end position="178"/>
    </location>
</feature>
<feature type="helix" evidence="12">
    <location>
        <begin position="189"/>
        <end position="194"/>
    </location>
</feature>
<feature type="helix" evidence="12">
    <location>
        <begin position="196"/>
        <end position="204"/>
    </location>
</feature>
<feature type="helix" evidence="12">
    <location>
        <begin position="209"/>
        <end position="211"/>
    </location>
</feature>
<feature type="strand" evidence="12">
    <location>
        <begin position="212"/>
        <end position="216"/>
    </location>
</feature>
<feature type="helix" evidence="12">
    <location>
        <begin position="217"/>
        <end position="222"/>
    </location>
</feature>
<feature type="helix" evidence="12">
    <location>
        <begin position="224"/>
        <end position="234"/>
    </location>
</feature>
<feature type="helix" evidence="12">
    <location>
        <begin position="243"/>
        <end position="245"/>
    </location>
</feature>
<feature type="strand" evidence="12">
    <location>
        <begin position="246"/>
        <end position="249"/>
    </location>
</feature>
<feature type="turn" evidence="12">
    <location>
        <begin position="250"/>
        <end position="253"/>
    </location>
</feature>
<feature type="strand" evidence="12">
    <location>
        <begin position="254"/>
        <end position="259"/>
    </location>
</feature>
<feature type="strand" evidence="12">
    <location>
        <begin position="262"/>
        <end position="264"/>
    </location>
</feature>
<feature type="helix" evidence="12">
    <location>
        <begin position="279"/>
        <end position="288"/>
    </location>
</feature>
<feature type="helix" evidence="12">
    <location>
        <begin position="290"/>
        <end position="300"/>
    </location>
</feature>
<keyword id="KW-0002">3D-structure</keyword>
<keyword id="KW-1015">Disulfide bond</keyword>
<keyword id="KW-0325">Glycoprotein</keyword>
<keyword id="KW-0333">Golgi apparatus</keyword>
<keyword id="KW-1267">Proteomics identification</keyword>
<keyword id="KW-1185">Reference proteome</keyword>
<keyword id="KW-0732">Signal</keyword>
<keyword id="KW-0808">Transferase</keyword>
<reference key="1">
    <citation type="journal article" date="1997" name="J. Biol. Chem.">
        <title>Molecular cloning and expression of mouse and human cDNAs encoding heparan sulfate D-glucosaminyl 3-O-sulfotransferase.</title>
        <authorList>
            <person name="Shworak N.W."/>
            <person name="Liu J."/>
            <person name="Fritze L.M.S."/>
            <person name="Schwartz J.J."/>
            <person name="Zhang L."/>
            <person name="Logeart D."/>
            <person name="Rosenberg R.D."/>
        </authorList>
    </citation>
    <scope>NUCLEOTIDE SEQUENCE [MRNA]</scope>
    <scope>FUNCTION</scope>
    <source>
        <tissue>Brain</tissue>
    </source>
</reference>
<reference key="2">
    <citation type="journal article" date="2004" name="Nat. Genet.">
        <title>Complete sequencing and characterization of 21,243 full-length human cDNAs.</title>
        <authorList>
            <person name="Ota T."/>
            <person name="Suzuki Y."/>
            <person name="Nishikawa T."/>
            <person name="Otsuki T."/>
            <person name="Sugiyama T."/>
            <person name="Irie R."/>
            <person name="Wakamatsu A."/>
            <person name="Hayashi K."/>
            <person name="Sato H."/>
            <person name="Nagai K."/>
            <person name="Kimura K."/>
            <person name="Makita H."/>
            <person name="Sekine M."/>
            <person name="Obayashi M."/>
            <person name="Nishi T."/>
            <person name="Shibahara T."/>
            <person name="Tanaka T."/>
            <person name="Ishii S."/>
            <person name="Yamamoto J."/>
            <person name="Saito K."/>
            <person name="Kawai Y."/>
            <person name="Isono Y."/>
            <person name="Nakamura Y."/>
            <person name="Nagahari K."/>
            <person name="Murakami K."/>
            <person name="Yasuda T."/>
            <person name="Iwayanagi T."/>
            <person name="Wagatsuma M."/>
            <person name="Shiratori A."/>
            <person name="Sudo H."/>
            <person name="Hosoiri T."/>
            <person name="Kaku Y."/>
            <person name="Kodaira H."/>
            <person name="Kondo H."/>
            <person name="Sugawara M."/>
            <person name="Takahashi M."/>
            <person name="Kanda K."/>
            <person name="Yokoi T."/>
            <person name="Furuya T."/>
            <person name="Kikkawa E."/>
            <person name="Omura Y."/>
            <person name="Abe K."/>
            <person name="Kamihara K."/>
            <person name="Katsuta N."/>
            <person name="Sato K."/>
            <person name="Tanikawa M."/>
            <person name="Yamazaki M."/>
            <person name="Ninomiya K."/>
            <person name="Ishibashi T."/>
            <person name="Yamashita H."/>
            <person name="Murakawa K."/>
            <person name="Fujimori K."/>
            <person name="Tanai H."/>
            <person name="Kimata M."/>
            <person name="Watanabe M."/>
            <person name="Hiraoka S."/>
            <person name="Chiba Y."/>
            <person name="Ishida S."/>
            <person name="Ono Y."/>
            <person name="Takiguchi S."/>
            <person name="Watanabe S."/>
            <person name="Yosida M."/>
            <person name="Hotuta T."/>
            <person name="Kusano J."/>
            <person name="Kanehori K."/>
            <person name="Takahashi-Fujii A."/>
            <person name="Hara H."/>
            <person name="Tanase T.-O."/>
            <person name="Nomura Y."/>
            <person name="Togiya S."/>
            <person name="Komai F."/>
            <person name="Hara R."/>
            <person name="Takeuchi K."/>
            <person name="Arita M."/>
            <person name="Imose N."/>
            <person name="Musashino K."/>
            <person name="Yuuki H."/>
            <person name="Oshima A."/>
            <person name="Sasaki N."/>
            <person name="Aotsuka S."/>
            <person name="Yoshikawa Y."/>
            <person name="Matsunawa H."/>
            <person name="Ichihara T."/>
            <person name="Shiohata N."/>
            <person name="Sano S."/>
            <person name="Moriya S."/>
            <person name="Momiyama H."/>
            <person name="Satoh N."/>
            <person name="Takami S."/>
            <person name="Terashima Y."/>
            <person name="Suzuki O."/>
            <person name="Nakagawa S."/>
            <person name="Senoh A."/>
            <person name="Mizoguchi H."/>
            <person name="Goto Y."/>
            <person name="Shimizu F."/>
            <person name="Wakebe H."/>
            <person name="Hishigaki H."/>
            <person name="Watanabe T."/>
            <person name="Sugiyama A."/>
            <person name="Takemoto M."/>
            <person name="Kawakami B."/>
            <person name="Yamazaki M."/>
            <person name="Watanabe K."/>
            <person name="Kumagai A."/>
            <person name="Itakura S."/>
            <person name="Fukuzumi Y."/>
            <person name="Fujimori Y."/>
            <person name="Komiyama M."/>
            <person name="Tashiro H."/>
            <person name="Tanigami A."/>
            <person name="Fujiwara T."/>
            <person name="Ono T."/>
            <person name="Yamada K."/>
            <person name="Fujii Y."/>
            <person name="Ozaki K."/>
            <person name="Hirao M."/>
            <person name="Ohmori Y."/>
            <person name="Kawabata A."/>
            <person name="Hikiji T."/>
            <person name="Kobatake N."/>
            <person name="Inagaki H."/>
            <person name="Ikema Y."/>
            <person name="Okamoto S."/>
            <person name="Okitani R."/>
            <person name="Kawakami T."/>
            <person name="Noguchi S."/>
            <person name="Itoh T."/>
            <person name="Shigeta K."/>
            <person name="Senba T."/>
            <person name="Matsumura K."/>
            <person name="Nakajima Y."/>
            <person name="Mizuno T."/>
            <person name="Morinaga M."/>
            <person name="Sasaki M."/>
            <person name="Togashi T."/>
            <person name="Oyama M."/>
            <person name="Hata H."/>
            <person name="Watanabe M."/>
            <person name="Komatsu T."/>
            <person name="Mizushima-Sugano J."/>
            <person name="Satoh T."/>
            <person name="Shirai Y."/>
            <person name="Takahashi Y."/>
            <person name="Nakagawa K."/>
            <person name="Okumura K."/>
            <person name="Nagase T."/>
            <person name="Nomura N."/>
            <person name="Kikuchi H."/>
            <person name="Masuho Y."/>
            <person name="Yamashita R."/>
            <person name="Nakai K."/>
            <person name="Yada T."/>
            <person name="Nakamura Y."/>
            <person name="Ohara O."/>
            <person name="Isogai T."/>
            <person name="Sugano S."/>
        </authorList>
    </citation>
    <scope>NUCLEOTIDE SEQUENCE [LARGE SCALE MRNA]</scope>
    <source>
        <tissue>Prostate</tissue>
    </source>
</reference>
<reference key="3">
    <citation type="submission" date="2005-07" db="EMBL/GenBank/DDBJ databases">
        <authorList>
            <person name="Mural R.J."/>
            <person name="Istrail S."/>
            <person name="Sutton G.G."/>
            <person name="Florea L."/>
            <person name="Halpern A.L."/>
            <person name="Mobarry C.M."/>
            <person name="Lippert R."/>
            <person name="Walenz B."/>
            <person name="Shatkay H."/>
            <person name="Dew I."/>
            <person name="Miller J.R."/>
            <person name="Flanigan M.J."/>
            <person name="Edwards N.J."/>
            <person name="Bolanos R."/>
            <person name="Fasulo D."/>
            <person name="Halldorsson B.V."/>
            <person name="Hannenhalli S."/>
            <person name="Turner R."/>
            <person name="Yooseph S."/>
            <person name="Lu F."/>
            <person name="Nusskern D.R."/>
            <person name="Shue B.C."/>
            <person name="Zheng X.H."/>
            <person name="Zhong F."/>
            <person name="Delcher A.L."/>
            <person name="Huson D.H."/>
            <person name="Kravitz S.A."/>
            <person name="Mouchard L."/>
            <person name="Reinert K."/>
            <person name="Remington K.A."/>
            <person name="Clark A.G."/>
            <person name="Waterman M.S."/>
            <person name="Eichler E.E."/>
            <person name="Adams M.D."/>
            <person name="Hunkapiller M.W."/>
            <person name="Myers E.W."/>
            <person name="Venter J.C."/>
        </authorList>
    </citation>
    <scope>NUCLEOTIDE SEQUENCE [LARGE SCALE GENOMIC DNA]</scope>
</reference>
<reference key="4">
    <citation type="journal article" date="2004" name="Genome Res.">
        <title>The status, quality, and expansion of the NIH full-length cDNA project: the Mammalian Gene Collection (MGC).</title>
        <authorList>
            <consortium name="The MGC Project Team"/>
        </authorList>
    </citation>
    <scope>NUCLEOTIDE SEQUENCE [LARGE SCALE MRNA]</scope>
    <scope>VARIANT THR-22</scope>
    <source>
        <tissue>Brain</tissue>
    </source>
</reference>
<reference key="5">
    <citation type="journal article" date="1996" name="J. Biol. Chem.">
        <title>Purification of heparan sulfate D-glucosaminyl 3-O-sulfotransferase.</title>
        <authorList>
            <person name="Liu J."/>
            <person name="Shworak N.W."/>
            <person name="Fritze L.M."/>
            <person name="Edelberg J.M."/>
            <person name="Rosenberg R.D."/>
        </authorList>
    </citation>
    <scope>FUNCTION</scope>
    <scope>CATALYTIC ACTIVITY</scope>
</reference>
<reference key="6">
    <citation type="journal article" date="1999" name="J. Biol. Chem.">
        <title>Expression of heparan sulfate D-glucosaminyl 3-O-sulfotransferase isoforms reveals novel substrate specificities.</title>
        <authorList>
            <person name="Liu J."/>
            <person name="Shworak N.W."/>
            <person name="Sinay P."/>
            <person name="Schwartz J.J."/>
            <person name="Zhang L."/>
            <person name="Fritze L.M.S."/>
            <person name="Rosenberg R.D."/>
        </authorList>
    </citation>
    <scope>FUNCTION</scope>
    <scope>CATALYTIC ACTIVITY</scope>
</reference>
<reference key="7">
    <citation type="journal article" date="1999" name="J. Biol. Chem.">
        <title>Multiple isoforms of heparan sulfate D-glucosaminyl 3-O-sulfotransferase. Isolation, characterization, and expression of human cDNAs and identification of distinct genomic loci.</title>
        <authorList>
            <person name="Shworak N.W."/>
            <person name="Liu J."/>
            <person name="Petros L.M."/>
            <person name="Zhang L."/>
            <person name="Kobayashi M."/>
            <person name="Copeland N.G."/>
            <person name="Jenkins N.A."/>
            <person name="Rosenberg R.D."/>
        </authorList>
    </citation>
    <scope>TISSUE SPECIFICITY</scope>
</reference>
<reference key="8">
    <citation type="submission" date="2005-06" db="PDB data bank">
        <title>Crystal structure of human heparan sulfate glucosamine 3-o-sulfotransferase 1 in complex with PAP.</title>
        <authorList>
            <consortium name="Structural genomics consortium (SGC)"/>
        </authorList>
    </citation>
    <scope>X-RAY CRYSTALLOGRAPHY (2.1 ANGSTROMS) OF 36-307 IN COMPLEX WITH SUBSTRATE ANALOG</scope>
    <scope>DISULFIDE BOND</scope>
    <scope>BINDING SITES</scope>
</reference>
<accession>O14792</accession>
<accession>B3KUA6</accession>
<accession>Q6PEY8</accession>
<protein>
    <recommendedName>
        <fullName>Heparan sulfate glucosamine 3-O-sulfotransferase 1</fullName>
        <ecNumber evidence="4 7">2.8.2.23</ecNumber>
    </recommendedName>
    <alternativeName>
        <fullName evidence="9">Heparan sulfate D-glucosaminyl 3-O-sulfotransferase 1</fullName>
        <shortName evidence="9">3-OST-1</shortName>
        <shortName>Heparan sulfate 3-O-sulfotransferase 1</shortName>
        <shortName>h3-OST-1</shortName>
    </alternativeName>
</protein>
<evidence type="ECO:0000250" key="1">
    <source>
        <dbReference type="UniProtKB" id="O35310"/>
    </source>
</evidence>
<evidence type="ECO:0000255" key="2"/>
<evidence type="ECO:0000269" key="3">
    <source>
    </source>
</evidence>
<evidence type="ECO:0000269" key="4">
    <source>
    </source>
</evidence>
<evidence type="ECO:0000269" key="5">
    <source>
    </source>
</evidence>
<evidence type="ECO:0000269" key="6">
    <source>
    </source>
</evidence>
<evidence type="ECO:0000269" key="7">
    <source>
    </source>
</evidence>
<evidence type="ECO:0000269" key="8">
    <source ref="8"/>
</evidence>
<evidence type="ECO:0000303" key="9">
    <source>
    </source>
</evidence>
<evidence type="ECO:0000305" key="10"/>
<evidence type="ECO:0000305" key="11">
    <source ref="8"/>
</evidence>
<evidence type="ECO:0007829" key="12">
    <source>
        <dbReference type="PDB" id="1ZRH"/>
    </source>
</evidence>
<gene>
    <name type="primary">HS3ST1</name>
    <name type="synonym">3OST</name>
    <name type="synonym">3OST1</name>
</gene>
<sequence>MAALLLGAVLLVAQPQLVPSRPAELGQQELLRKAGTLQDDVRDGVAPNGSAQQLPQTIIIGVRKGGTRALLEMLSLHPDVAAAENEVHFFDWEEHYSHGLGWYLSQMPFSWPHQLTVEKTPAYFTSPKVPERVYSMNPSIRLLLILRDPSERVLSDYTQVFYNHMQKHKPYPSIEEFLVRDGRLNVDYKALNRSLYHVHMQNWLRFFPLRHIHIVDGDRLIRDPFPEIQKVERFLKLSPQINASNFYFNKTKGFYCLRDSGRDRCLHESKGRAHPQVDPKLLNKLHEYFHEPNKKFFELVGRTFDWH</sequence>
<comment type="function">
    <text evidence="4 5 7">Sulfotransferase that utilizes 3'-phospho-5'-adenylyl sulfate (PAPS) to catalyze the transfer of a sulfo group to position 3 of glucosamine residues in heparan (PubMed:8900198, PubMed:9346953, PubMed:9988768). Catalyzes the rate limiting step in the biosynthesis of heparan sulfate (HSact) (PubMed:8900198, PubMed:9988768). This modification is a crucial step in the biosynthesis of anticoagulant heparan sulfate as it completes the structure of the antithrombin pentasaccharide binding site (PubMed:8900198, PubMed:9988768).</text>
</comment>
<comment type="catalytic activity">
    <reaction evidence="4 7">
        <text>alpha-D-glucosaminyl-[heparan sulfate](n) + 3'-phosphoadenylyl sulfate = 3-sulfo-alpha-D-glucosaminyl-[heparan sulfate](n) + adenosine 3',5'-bisphosphate + H(+)</text>
        <dbReference type="Rhea" id="RHEA:15461"/>
        <dbReference type="Rhea" id="RHEA-COMP:9830"/>
        <dbReference type="Rhea" id="RHEA-COMP:9831"/>
        <dbReference type="ChEBI" id="CHEBI:15378"/>
        <dbReference type="ChEBI" id="CHEBI:58339"/>
        <dbReference type="ChEBI" id="CHEBI:58343"/>
        <dbReference type="ChEBI" id="CHEBI:58388"/>
        <dbReference type="ChEBI" id="CHEBI:70975"/>
        <dbReference type="EC" id="2.8.2.23"/>
    </reaction>
</comment>
<comment type="subcellular location">
    <subcellularLocation>
        <location evidence="10">Golgi apparatus lumen</location>
    </subcellularLocation>
</comment>
<comment type="tissue specificity">
    <text evidence="6">Highly expressed in the brain and kidney and weakly expressed in the heart, lung and placenta.</text>
</comment>
<comment type="similarity">
    <text evidence="10">Belongs to the sulfotransferase 1 family.</text>
</comment>
<proteinExistence type="evidence at protein level"/>